<accession>A8AJ11</accession>
<keyword id="KW-0093">Biotin biosynthesis</keyword>
<keyword id="KW-0663">Pyridoxal phosphate</keyword>
<keyword id="KW-1185">Reference proteome</keyword>
<keyword id="KW-0808">Transferase</keyword>
<gene>
    <name evidence="1" type="primary">bioF</name>
    <name type="ordered locus">CKO_02352</name>
</gene>
<sequence length="384" mass="41435">MTWQQKIDDALTARRSADALRRRYAVTQGAGRWLVANERQYLNFSSNDYLGLSHHPQIIRAWQQGAERFGVGSGGSGHVSGYSVAHQALEEALAGWLGYSRALLFISGFAANQAVIAALMAKDDRIVADRLSHASLLEAANLSPATLRRFTHNDPQHLARLLDAPCGGQQLVVTEGIFSMDGDGAPLAEIHRAARQRNAWLLVDDAHGIGVTGDEGRGSCWRQQVKPELLIVTFGKGFGVSGAAILCSESVADYLLQFARHLIYSTSMPPAQAQALSAALAVIRSPEGADRREKLAALIQRFRSGVKASDFTLANSHSAIQPLIVGDNARALRLADTLREQGCWVSAIRPPTVPAGTARLRLTLTQAHEAQDIDRLLEVLDGAG</sequence>
<organism>
    <name type="scientific">Citrobacter koseri (strain ATCC BAA-895 / CDC 4225-83 / SGSC4696)</name>
    <dbReference type="NCBI Taxonomy" id="290338"/>
    <lineage>
        <taxon>Bacteria</taxon>
        <taxon>Pseudomonadati</taxon>
        <taxon>Pseudomonadota</taxon>
        <taxon>Gammaproteobacteria</taxon>
        <taxon>Enterobacterales</taxon>
        <taxon>Enterobacteriaceae</taxon>
        <taxon>Citrobacter</taxon>
    </lineage>
</organism>
<dbReference type="EC" id="2.3.1.47" evidence="1"/>
<dbReference type="EMBL" id="CP000822">
    <property type="protein sequence ID" value="ABV13474.1"/>
    <property type="molecule type" value="Genomic_DNA"/>
</dbReference>
<dbReference type="RefSeq" id="WP_012133201.1">
    <property type="nucleotide sequence ID" value="NC_009792.1"/>
</dbReference>
<dbReference type="SMR" id="A8AJ11"/>
<dbReference type="STRING" id="290338.CKO_02352"/>
<dbReference type="GeneID" id="45136255"/>
<dbReference type="KEGG" id="cko:CKO_02352"/>
<dbReference type="HOGENOM" id="CLU_015846_11_2_6"/>
<dbReference type="OrthoDB" id="9807157at2"/>
<dbReference type="UniPathway" id="UPA00078"/>
<dbReference type="Proteomes" id="UP000008148">
    <property type="component" value="Chromosome"/>
</dbReference>
<dbReference type="GO" id="GO:0008710">
    <property type="term" value="F:8-amino-7-oxononanoate synthase activity"/>
    <property type="evidence" value="ECO:0007669"/>
    <property type="project" value="UniProtKB-UniRule"/>
</dbReference>
<dbReference type="GO" id="GO:0030170">
    <property type="term" value="F:pyridoxal phosphate binding"/>
    <property type="evidence" value="ECO:0007669"/>
    <property type="project" value="UniProtKB-UniRule"/>
</dbReference>
<dbReference type="GO" id="GO:0009102">
    <property type="term" value="P:biotin biosynthetic process"/>
    <property type="evidence" value="ECO:0007669"/>
    <property type="project" value="UniProtKB-UniRule"/>
</dbReference>
<dbReference type="CDD" id="cd06454">
    <property type="entry name" value="KBL_like"/>
    <property type="match status" value="1"/>
</dbReference>
<dbReference type="FunFam" id="3.40.640.10:FF:000095">
    <property type="entry name" value="8-amino-7-oxononanoate synthase"/>
    <property type="match status" value="1"/>
</dbReference>
<dbReference type="Gene3D" id="3.90.1150.10">
    <property type="entry name" value="Aspartate Aminotransferase, domain 1"/>
    <property type="match status" value="1"/>
</dbReference>
<dbReference type="Gene3D" id="3.40.640.10">
    <property type="entry name" value="Type I PLP-dependent aspartate aminotransferase-like (Major domain)"/>
    <property type="match status" value="1"/>
</dbReference>
<dbReference type="HAMAP" id="MF_01693">
    <property type="entry name" value="BioF_aminotrans_2"/>
    <property type="match status" value="1"/>
</dbReference>
<dbReference type="InterPro" id="IPR001917">
    <property type="entry name" value="Aminotrans_II_pyridoxalP_BS"/>
</dbReference>
<dbReference type="InterPro" id="IPR004839">
    <property type="entry name" value="Aminotransferase_I/II_large"/>
</dbReference>
<dbReference type="InterPro" id="IPR050087">
    <property type="entry name" value="AON_synthase_class-II"/>
</dbReference>
<dbReference type="InterPro" id="IPR004723">
    <property type="entry name" value="AONS_Archaea/Proteobacteria"/>
</dbReference>
<dbReference type="InterPro" id="IPR022834">
    <property type="entry name" value="AONS_Proteobacteria"/>
</dbReference>
<dbReference type="InterPro" id="IPR015424">
    <property type="entry name" value="PyrdxlP-dep_Trfase"/>
</dbReference>
<dbReference type="InterPro" id="IPR015421">
    <property type="entry name" value="PyrdxlP-dep_Trfase_major"/>
</dbReference>
<dbReference type="InterPro" id="IPR015422">
    <property type="entry name" value="PyrdxlP-dep_Trfase_small"/>
</dbReference>
<dbReference type="NCBIfam" id="TIGR00858">
    <property type="entry name" value="bioF"/>
    <property type="match status" value="1"/>
</dbReference>
<dbReference type="PANTHER" id="PTHR13693:SF100">
    <property type="entry name" value="8-AMINO-7-OXONONANOATE SYNTHASE"/>
    <property type="match status" value="1"/>
</dbReference>
<dbReference type="PANTHER" id="PTHR13693">
    <property type="entry name" value="CLASS II AMINOTRANSFERASE/8-AMINO-7-OXONONANOATE SYNTHASE"/>
    <property type="match status" value="1"/>
</dbReference>
<dbReference type="Pfam" id="PF00155">
    <property type="entry name" value="Aminotran_1_2"/>
    <property type="match status" value="1"/>
</dbReference>
<dbReference type="SUPFAM" id="SSF53383">
    <property type="entry name" value="PLP-dependent transferases"/>
    <property type="match status" value="1"/>
</dbReference>
<dbReference type="PROSITE" id="PS00599">
    <property type="entry name" value="AA_TRANSFER_CLASS_2"/>
    <property type="match status" value="1"/>
</dbReference>
<name>BIOF_CITK8</name>
<proteinExistence type="inferred from homology"/>
<comment type="function">
    <text evidence="1">Catalyzes the decarboxylative condensation of pimeloyl-[acyl-carrier protein] and L-alanine to produce 8-amino-7-oxononanoate (AON), [acyl-carrier protein], and carbon dioxide.</text>
</comment>
<comment type="catalytic activity">
    <reaction evidence="1">
        <text>6-carboxyhexanoyl-[ACP] + L-alanine + H(+) = (8S)-8-amino-7-oxononanoate + holo-[ACP] + CO2</text>
        <dbReference type="Rhea" id="RHEA:42288"/>
        <dbReference type="Rhea" id="RHEA-COMP:9685"/>
        <dbReference type="Rhea" id="RHEA-COMP:9955"/>
        <dbReference type="ChEBI" id="CHEBI:15378"/>
        <dbReference type="ChEBI" id="CHEBI:16526"/>
        <dbReference type="ChEBI" id="CHEBI:57972"/>
        <dbReference type="ChEBI" id="CHEBI:64479"/>
        <dbReference type="ChEBI" id="CHEBI:78846"/>
        <dbReference type="ChEBI" id="CHEBI:149468"/>
        <dbReference type="EC" id="2.3.1.47"/>
    </reaction>
</comment>
<comment type="cofactor">
    <cofactor evidence="1">
        <name>pyridoxal 5'-phosphate</name>
        <dbReference type="ChEBI" id="CHEBI:597326"/>
    </cofactor>
</comment>
<comment type="pathway">
    <text evidence="1">Cofactor biosynthesis; biotin biosynthesis.</text>
</comment>
<comment type="subunit">
    <text evidence="1">Homodimer.</text>
</comment>
<comment type="similarity">
    <text evidence="1">Belongs to the class-II pyridoxal-phosphate-dependent aminotransferase family. BioF subfamily.</text>
</comment>
<reference key="1">
    <citation type="submission" date="2007-08" db="EMBL/GenBank/DDBJ databases">
        <authorList>
            <consortium name="The Citrobacter koseri Genome Sequencing Project"/>
            <person name="McClelland M."/>
            <person name="Sanderson E.K."/>
            <person name="Porwollik S."/>
            <person name="Spieth J."/>
            <person name="Clifton W.S."/>
            <person name="Latreille P."/>
            <person name="Courtney L."/>
            <person name="Wang C."/>
            <person name="Pepin K."/>
            <person name="Bhonagiri V."/>
            <person name="Nash W."/>
            <person name="Johnson M."/>
            <person name="Thiruvilangam P."/>
            <person name="Wilson R."/>
        </authorList>
    </citation>
    <scope>NUCLEOTIDE SEQUENCE [LARGE SCALE GENOMIC DNA]</scope>
    <source>
        <strain>ATCC BAA-895 / CDC 4225-83 / SGSC4696</strain>
    </source>
</reference>
<protein>
    <recommendedName>
        <fullName evidence="1">8-amino-7-oxononanoate synthase</fullName>
        <shortName evidence="1">AONS</shortName>
        <ecNumber evidence="1">2.3.1.47</ecNumber>
    </recommendedName>
    <alternativeName>
        <fullName evidence="1">7-keto-8-amino-pelargonic acid synthase</fullName>
        <shortName evidence="1">7-KAP synthase</shortName>
        <shortName evidence="1">KAPA synthase</shortName>
    </alternativeName>
    <alternativeName>
        <fullName evidence="1">8-amino-7-ketopelargonate synthase</fullName>
    </alternativeName>
</protein>
<evidence type="ECO:0000255" key="1">
    <source>
        <dbReference type="HAMAP-Rule" id="MF_01693"/>
    </source>
</evidence>
<feature type="chain" id="PRO_0000380955" description="8-amino-7-oxononanoate synthase">
    <location>
        <begin position="1"/>
        <end position="384"/>
    </location>
</feature>
<feature type="binding site" evidence="1">
    <location>
        <position position="21"/>
    </location>
    <ligand>
        <name>substrate</name>
    </ligand>
</feature>
<feature type="binding site" evidence="1">
    <location>
        <begin position="108"/>
        <end position="109"/>
    </location>
    <ligand>
        <name>pyridoxal 5'-phosphate</name>
        <dbReference type="ChEBI" id="CHEBI:597326"/>
    </ligand>
</feature>
<feature type="binding site" evidence="1">
    <location>
        <position position="133"/>
    </location>
    <ligand>
        <name>substrate</name>
    </ligand>
</feature>
<feature type="binding site" evidence="1">
    <location>
        <position position="179"/>
    </location>
    <ligand>
        <name>pyridoxal 5'-phosphate</name>
        <dbReference type="ChEBI" id="CHEBI:597326"/>
    </ligand>
</feature>
<feature type="binding site" evidence="1">
    <location>
        <position position="207"/>
    </location>
    <ligand>
        <name>pyridoxal 5'-phosphate</name>
        <dbReference type="ChEBI" id="CHEBI:597326"/>
    </ligand>
</feature>
<feature type="binding site" evidence="1">
    <location>
        <position position="233"/>
    </location>
    <ligand>
        <name>pyridoxal 5'-phosphate</name>
        <dbReference type="ChEBI" id="CHEBI:597326"/>
    </ligand>
</feature>
<feature type="binding site" evidence="1">
    <location>
        <position position="352"/>
    </location>
    <ligand>
        <name>substrate</name>
    </ligand>
</feature>
<feature type="modified residue" description="N6-(pyridoxal phosphate)lysine" evidence="1">
    <location>
        <position position="236"/>
    </location>
</feature>